<feature type="chain" id="PRO_1000132479" description="Probable glycine dehydrogenase (decarboxylating) subunit 1">
    <location>
        <begin position="1"/>
        <end position="448"/>
    </location>
</feature>
<name>GCSPA_EXIS2</name>
<organism>
    <name type="scientific">Exiguobacterium sibiricum (strain DSM 17290 / CCUG 55495 / CIP 109462 / JCM 13490 / 255-15)</name>
    <dbReference type="NCBI Taxonomy" id="262543"/>
    <lineage>
        <taxon>Bacteria</taxon>
        <taxon>Bacillati</taxon>
        <taxon>Bacillota</taxon>
        <taxon>Bacilli</taxon>
        <taxon>Bacillales</taxon>
        <taxon>Bacillales Family XII. Incertae Sedis</taxon>
        <taxon>Exiguobacterium</taxon>
    </lineage>
</organism>
<protein>
    <recommendedName>
        <fullName evidence="1">Probable glycine dehydrogenase (decarboxylating) subunit 1</fullName>
        <ecNumber evidence="1">1.4.4.2</ecNumber>
    </recommendedName>
    <alternativeName>
        <fullName evidence="1">Glycine cleavage system P-protein subunit 1</fullName>
    </alternativeName>
    <alternativeName>
        <fullName evidence="1">Glycine decarboxylase subunit 1</fullName>
    </alternativeName>
    <alternativeName>
        <fullName evidence="1">Glycine dehydrogenase (aminomethyl-transferring) subunit 1</fullName>
    </alternativeName>
</protein>
<sequence length="448" mass="48428">MDFRYLPMTQEDEKEMLQTIGADSIEDLLADIPASVRDQGTLEEVGIPLPETDLIRTLSKLADQNMNTKQYPSFLGAGIYDHYAPAVVNHMLLRSEFYTAYTPYQPEISQGELQAIFEYQTMICELTGMDVANSSMYDGITALAEAAMLACAHKKKKTIVLSDGVHPEAHDVVRTYANGPGLEVETLPLVNGETAIANLDALEDVACVIVQYPNFYGRVEDLQALADATHAKGGLFIVSANPLALGLLEAPGKLGADITIGDCQPFGIPQSFGGPTCGYFTTTKALMRKIPGRLVGQTVDEDGKRGFVLTLQAREQHIRRDKATSNICSNQALNALAASIAMSALGKRGIRELATRNLQTAYALKKSLIQAGFHIVDDGPSFNEFVVELPIDATEAGKQLLQAGIIGGLPLGTFDESRSNQMLVCATELRTKEELDQFVTALGGLTHA</sequence>
<keyword id="KW-0560">Oxidoreductase</keyword>
<keyword id="KW-1185">Reference proteome</keyword>
<proteinExistence type="inferred from homology"/>
<reference key="1">
    <citation type="submission" date="2008-04" db="EMBL/GenBank/DDBJ databases">
        <title>Complete sequence of chromosome of Exiguobacterium sibiricum 255-15.</title>
        <authorList>
            <consortium name="US DOE Joint Genome Institute"/>
            <person name="Copeland A."/>
            <person name="Lucas S."/>
            <person name="Lapidus A."/>
            <person name="Glavina del Rio T."/>
            <person name="Dalin E."/>
            <person name="Tice H."/>
            <person name="Bruce D."/>
            <person name="Goodwin L."/>
            <person name="Pitluck S."/>
            <person name="Kiss H."/>
            <person name="Chertkov O."/>
            <person name="Monk C."/>
            <person name="Brettin T."/>
            <person name="Detter J.C."/>
            <person name="Han C."/>
            <person name="Kuske C.R."/>
            <person name="Schmutz J."/>
            <person name="Larimer F."/>
            <person name="Land M."/>
            <person name="Hauser L."/>
            <person name="Kyrpides N."/>
            <person name="Mikhailova N."/>
            <person name="Vishnivetskaya T."/>
            <person name="Rodrigues D.F."/>
            <person name="Gilichinsky D."/>
            <person name="Tiedje J."/>
            <person name="Richardson P."/>
        </authorList>
    </citation>
    <scope>NUCLEOTIDE SEQUENCE [LARGE SCALE GENOMIC DNA]</scope>
    <source>
        <strain>DSM 17290 / CCUG 55495 / CIP 109462 / JCM 13490 / 255-15</strain>
    </source>
</reference>
<gene>
    <name evidence="1" type="primary">gcvPA</name>
    <name type="ordered locus">Exig_0890</name>
</gene>
<accession>B1YLN7</accession>
<comment type="function">
    <text evidence="1">The glycine cleavage system catalyzes the degradation of glycine. The P protein binds the alpha-amino group of glycine through its pyridoxal phosphate cofactor; CO(2) is released and the remaining methylamine moiety is then transferred to the lipoamide cofactor of the H protein.</text>
</comment>
<comment type="catalytic activity">
    <reaction evidence="1">
        <text>N(6)-[(R)-lipoyl]-L-lysyl-[glycine-cleavage complex H protein] + glycine + H(+) = N(6)-[(R)-S(8)-aminomethyldihydrolipoyl]-L-lysyl-[glycine-cleavage complex H protein] + CO2</text>
        <dbReference type="Rhea" id="RHEA:24304"/>
        <dbReference type="Rhea" id="RHEA-COMP:10494"/>
        <dbReference type="Rhea" id="RHEA-COMP:10495"/>
        <dbReference type="ChEBI" id="CHEBI:15378"/>
        <dbReference type="ChEBI" id="CHEBI:16526"/>
        <dbReference type="ChEBI" id="CHEBI:57305"/>
        <dbReference type="ChEBI" id="CHEBI:83099"/>
        <dbReference type="ChEBI" id="CHEBI:83143"/>
        <dbReference type="EC" id="1.4.4.2"/>
    </reaction>
</comment>
<comment type="subunit">
    <text evidence="1">The glycine cleavage system is composed of four proteins: P, T, L and H. In this organism, the P 'protein' is a heterodimer of two subunits.</text>
</comment>
<comment type="similarity">
    <text evidence="1">Belongs to the GcvP family. N-terminal subunit subfamily.</text>
</comment>
<dbReference type="EC" id="1.4.4.2" evidence="1"/>
<dbReference type="EMBL" id="CP001022">
    <property type="protein sequence ID" value="ACB60370.1"/>
    <property type="molecule type" value="Genomic_DNA"/>
</dbReference>
<dbReference type="RefSeq" id="WP_012369794.1">
    <property type="nucleotide sequence ID" value="NC_010556.1"/>
</dbReference>
<dbReference type="SMR" id="B1YLN7"/>
<dbReference type="STRING" id="262543.Exig_0890"/>
<dbReference type="KEGG" id="esi:Exig_0890"/>
<dbReference type="eggNOG" id="COG0403">
    <property type="taxonomic scope" value="Bacteria"/>
</dbReference>
<dbReference type="HOGENOM" id="CLU_004620_0_2_9"/>
<dbReference type="OrthoDB" id="9771867at2"/>
<dbReference type="Proteomes" id="UP000001681">
    <property type="component" value="Chromosome"/>
</dbReference>
<dbReference type="GO" id="GO:0004375">
    <property type="term" value="F:glycine dehydrogenase (decarboxylating) activity"/>
    <property type="evidence" value="ECO:0007669"/>
    <property type="project" value="UniProtKB-EC"/>
</dbReference>
<dbReference type="GO" id="GO:0019464">
    <property type="term" value="P:glycine decarboxylation via glycine cleavage system"/>
    <property type="evidence" value="ECO:0007669"/>
    <property type="project" value="UniProtKB-UniRule"/>
</dbReference>
<dbReference type="GO" id="GO:0009116">
    <property type="term" value="P:nucleoside metabolic process"/>
    <property type="evidence" value="ECO:0007669"/>
    <property type="project" value="InterPro"/>
</dbReference>
<dbReference type="CDD" id="cd00613">
    <property type="entry name" value="GDC-P"/>
    <property type="match status" value="1"/>
</dbReference>
<dbReference type="Gene3D" id="3.90.1150.10">
    <property type="entry name" value="Aspartate Aminotransferase, domain 1"/>
    <property type="match status" value="1"/>
</dbReference>
<dbReference type="Gene3D" id="3.40.640.10">
    <property type="entry name" value="Type I PLP-dependent aspartate aminotransferase-like (Major domain)"/>
    <property type="match status" value="1"/>
</dbReference>
<dbReference type="HAMAP" id="MF_00712">
    <property type="entry name" value="GcvPA"/>
    <property type="match status" value="1"/>
</dbReference>
<dbReference type="InterPro" id="IPR023010">
    <property type="entry name" value="GcvPA"/>
</dbReference>
<dbReference type="InterPro" id="IPR049315">
    <property type="entry name" value="GDC-P_N"/>
</dbReference>
<dbReference type="InterPro" id="IPR020581">
    <property type="entry name" value="GDC_P"/>
</dbReference>
<dbReference type="InterPro" id="IPR015424">
    <property type="entry name" value="PyrdxlP-dep_Trfase"/>
</dbReference>
<dbReference type="InterPro" id="IPR015421">
    <property type="entry name" value="PyrdxlP-dep_Trfase_major"/>
</dbReference>
<dbReference type="InterPro" id="IPR015422">
    <property type="entry name" value="PyrdxlP-dep_Trfase_small"/>
</dbReference>
<dbReference type="NCBIfam" id="NF001696">
    <property type="entry name" value="PRK00451.1"/>
    <property type="match status" value="1"/>
</dbReference>
<dbReference type="PANTHER" id="PTHR42806">
    <property type="entry name" value="GLYCINE CLEAVAGE SYSTEM P-PROTEIN"/>
    <property type="match status" value="1"/>
</dbReference>
<dbReference type="PANTHER" id="PTHR42806:SF1">
    <property type="entry name" value="GLYCINE DEHYDROGENASE (DECARBOXYLATING)"/>
    <property type="match status" value="1"/>
</dbReference>
<dbReference type="Pfam" id="PF02347">
    <property type="entry name" value="GDC-P"/>
    <property type="match status" value="1"/>
</dbReference>
<dbReference type="PIRSF" id="PIRSF006815">
    <property type="entry name" value="GcvPA"/>
    <property type="match status" value="1"/>
</dbReference>
<dbReference type="SUPFAM" id="SSF53383">
    <property type="entry name" value="PLP-dependent transferases"/>
    <property type="match status" value="1"/>
</dbReference>
<evidence type="ECO:0000255" key="1">
    <source>
        <dbReference type="HAMAP-Rule" id="MF_00712"/>
    </source>
</evidence>